<keyword id="KW-0106">Calcium</keyword>
<keyword id="KW-0130">Cell adhesion</keyword>
<keyword id="KW-1003">Cell membrane</keyword>
<keyword id="KW-0165">Cleavage on pair of basic residues</keyword>
<keyword id="KW-0325">Glycoprotein</keyword>
<keyword id="KW-0472">Membrane</keyword>
<keyword id="KW-0479">Metal-binding</keyword>
<keyword id="KW-0597">Phosphoprotein</keyword>
<keyword id="KW-1185">Reference proteome</keyword>
<keyword id="KW-0677">Repeat</keyword>
<keyword id="KW-0732">Signal</keyword>
<keyword id="KW-0812">Transmembrane</keyword>
<keyword id="KW-1133">Transmembrane helix</keyword>
<gene>
    <name type="primary">CDH18</name>
</gene>
<proteinExistence type="evidence at transcript level"/>
<protein>
    <recommendedName>
        <fullName>Cadherin-18</fullName>
    </recommendedName>
</protein>
<dbReference type="EMBL" id="BC123714">
    <property type="protein sequence ID" value="AAI23715.1"/>
    <property type="molecule type" value="mRNA"/>
</dbReference>
<dbReference type="RefSeq" id="NP_001070305.1">
    <property type="nucleotide sequence ID" value="NM_001076837.1"/>
</dbReference>
<dbReference type="SMR" id="Q08DJ5"/>
<dbReference type="FunCoup" id="Q08DJ5">
    <property type="interactions" value="598"/>
</dbReference>
<dbReference type="STRING" id="9913.ENSBTAP00000031053"/>
<dbReference type="GlyCosmos" id="Q08DJ5">
    <property type="glycosylation" value="4 sites, No reported glycans"/>
</dbReference>
<dbReference type="GlyGen" id="Q08DJ5">
    <property type="glycosylation" value="4 sites"/>
</dbReference>
<dbReference type="PaxDb" id="9913-ENSBTAP00000031053"/>
<dbReference type="Ensembl" id="ENSBTAT00000031090.5">
    <property type="protein sequence ID" value="ENSBTAP00000031053.4"/>
    <property type="gene ID" value="ENSBTAG00000037844.3"/>
</dbReference>
<dbReference type="GeneID" id="512080"/>
<dbReference type="KEGG" id="bta:512080"/>
<dbReference type="CTD" id="1016"/>
<dbReference type="VEuPathDB" id="HostDB:ENSBTAG00000037844"/>
<dbReference type="VGNC" id="VGNC:27097">
    <property type="gene designation" value="CDH18"/>
</dbReference>
<dbReference type="eggNOG" id="KOG3594">
    <property type="taxonomic scope" value="Eukaryota"/>
</dbReference>
<dbReference type="GeneTree" id="ENSGT00940000157512"/>
<dbReference type="HOGENOM" id="CLU_005284_3_1_1"/>
<dbReference type="InParanoid" id="Q08DJ5"/>
<dbReference type="OMA" id="RTMQDVY"/>
<dbReference type="OrthoDB" id="6252479at2759"/>
<dbReference type="TreeFam" id="TF329887"/>
<dbReference type="Reactome" id="R-BTA-418990">
    <property type="pathway name" value="Adherens junctions interactions"/>
</dbReference>
<dbReference type="Proteomes" id="UP000009136">
    <property type="component" value="Chromosome 20"/>
</dbReference>
<dbReference type="Bgee" id="ENSBTAG00000037844">
    <property type="expression patterns" value="Expressed in adenohypophysis and 23 other cell types or tissues"/>
</dbReference>
<dbReference type="GO" id="GO:0005912">
    <property type="term" value="C:adherens junction"/>
    <property type="evidence" value="ECO:0000318"/>
    <property type="project" value="GO_Central"/>
</dbReference>
<dbReference type="GO" id="GO:0016342">
    <property type="term" value="C:catenin complex"/>
    <property type="evidence" value="ECO:0000318"/>
    <property type="project" value="GO_Central"/>
</dbReference>
<dbReference type="GO" id="GO:0008013">
    <property type="term" value="F:beta-catenin binding"/>
    <property type="evidence" value="ECO:0000318"/>
    <property type="project" value="GO_Central"/>
</dbReference>
<dbReference type="GO" id="GO:0045296">
    <property type="term" value="F:cadherin binding"/>
    <property type="evidence" value="ECO:0000318"/>
    <property type="project" value="GO_Central"/>
</dbReference>
<dbReference type="GO" id="GO:0005509">
    <property type="term" value="F:calcium ion binding"/>
    <property type="evidence" value="ECO:0007669"/>
    <property type="project" value="InterPro"/>
</dbReference>
<dbReference type="GO" id="GO:0034332">
    <property type="term" value="P:adherens junction organization"/>
    <property type="evidence" value="ECO:0000318"/>
    <property type="project" value="GO_Central"/>
</dbReference>
<dbReference type="GO" id="GO:0016339">
    <property type="term" value="P:calcium-dependent cell-cell adhesion via plasma membrane cell adhesion molecules"/>
    <property type="evidence" value="ECO:0000318"/>
    <property type="project" value="GO_Central"/>
</dbReference>
<dbReference type="GO" id="GO:0016477">
    <property type="term" value="P:cell migration"/>
    <property type="evidence" value="ECO:0000318"/>
    <property type="project" value="GO_Central"/>
</dbReference>
<dbReference type="GO" id="GO:0000902">
    <property type="term" value="P:cell morphogenesis"/>
    <property type="evidence" value="ECO:0000318"/>
    <property type="project" value="GO_Central"/>
</dbReference>
<dbReference type="GO" id="GO:0044331">
    <property type="term" value="P:cell-cell adhesion mediated by cadherin"/>
    <property type="evidence" value="ECO:0000318"/>
    <property type="project" value="GO_Central"/>
</dbReference>
<dbReference type="GO" id="GO:0007043">
    <property type="term" value="P:cell-cell junction assembly"/>
    <property type="evidence" value="ECO:0000318"/>
    <property type="project" value="GO_Central"/>
</dbReference>
<dbReference type="GO" id="GO:0007156">
    <property type="term" value="P:homophilic cell adhesion via plasma membrane adhesion molecules"/>
    <property type="evidence" value="ECO:0007669"/>
    <property type="project" value="InterPro"/>
</dbReference>
<dbReference type="CDD" id="cd11304">
    <property type="entry name" value="Cadherin_repeat"/>
    <property type="match status" value="5"/>
</dbReference>
<dbReference type="FunFam" id="4.10.900.10:FF:000001">
    <property type="entry name" value="Cadherin 2"/>
    <property type="match status" value="1"/>
</dbReference>
<dbReference type="FunFam" id="2.60.40.60:FF:000008">
    <property type="entry name" value="Cadherin 24"/>
    <property type="match status" value="1"/>
</dbReference>
<dbReference type="FunFam" id="2.60.40.60:FF:000009">
    <property type="entry name" value="Cadherin 24"/>
    <property type="match status" value="1"/>
</dbReference>
<dbReference type="FunFam" id="2.60.40.60:FF:000012">
    <property type="entry name" value="Cadherin 24"/>
    <property type="match status" value="1"/>
</dbReference>
<dbReference type="FunFam" id="2.60.40.60:FF:000017">
    <property type="entry name" value="Cadherin 24"/>
    <property type="match status" value="1"/>
</dbReference>
<dbReference type="FunFam" id="2.60.40.60:FF:000014">
    <property type="entry name" value="Cadherin 8"/>
    <property type="match status" value="1"/>
</dbReference>
<dbReference type="Gene3D" id="2.60.40.60">
    <property type="entry name" value="Cadherins"/>
    <property type="match status" value="5"/>
</dbReference>
<dbReference type="Gene3D" id="4.10.900.10">
    <property type="entry name" value="TCF3-CBD (Catenin binding domain)"/>
    <property type="match status" value="1"/>
</dbReference>
<dbReference type="InterPro" id="IPR039808">
    <property type="entry name" value="Cadherin"/>
</dbReference>
<dbReference type="InterPro" id="IPR002126">
    <property type="entry name" value="Cadherin-like_dom"/>
</dbReference>
<dbReference type="InterPro" id="IPR015919">
    <property type="entry name" value="Cadherin-like_sf"/>
</dbReference>
<dbReference type="InterPro" id="IPR020894">
    <property type="entry name" value="Cadherin_CS"/>
</dbReference>
<dbReference type="InterPro" id="IPR000233">
    <property type="entry name" value="Cadherin_Y-type_LIR"/>
</dbReference>
<dbReference type="InterPro" id="IPR027397">
    <property type="entry name" value="Catenin-bd_sf"/>
</dbReference>
<dbReference type="PANTHER" id="PTHR24027:SF106">
    <property type="entry name" value="CADHERIN-18"/>
    <property type="match status" value="1"/>
</dbReference>
<dbReference type="PANTHER" id="PTHR24027">
    <property type="entry name" value="CADHERIN-23"/>
    <property type="match status" value="1"/>
</dbReference>
<dbReference type="Pfam" id="PF01049">
    <property type="entry name" value="CADH_Y-type_LIR"/>
    <property type="match status" value="1"/>
</dbReference>
<dbReference type="Pfam" id="PF00028">
    <property type="entry name" value="Cadherin"/>
    <property type="match status" value="5"/>
</dbReference>
<dbReference type="PRINTS" id="PR00205">
    <property type="entry name" value="CADHERIN"/>
</dbReference>
<dbReference type="SMART" id="SM00112">
    <property type="entry name" value="CA"/>
    <property type="match status" value="5"/>
</dbReference>
<dbReference type="SUPFAM" id="SSF49313">
    <property type="entry name" value="Cadherin-like"/>
    <property type="match status" value="5"/>
</dbReference>
<dbReference type="PROSITE" id="PS00232">
    <property type="entry name" value="CADHERIN_1"/>
    <property type="match status" value="3"/>
</dbReference>
<dbReference type="PROSITE" id="PS50268">
    <property type="entry name" value="CADHERIN_2"/>
    <property type="match status" value="5"/>
</dbReference>
<sequence>MKITSTSCICPVLVCLCFVQRCYGTTHHGSIRGTRNQTKHIEGETEVHHRPKRGWVWNQFFVLEEHMGPDPQYVGKLHSNSDKGDGSVKYILTGEGAGTIFIIDDTTGDIHSTKSLDREQKTHYVLHAQAIDRRTNKPLEPESEFIIKVQDINDNAPKFTDGPYIVTVPEMSDMGTSVLQVTATDADDPTYGNSARVVYSILQGQPYFSVDPKTGVIRTALHNMDREAREHYSVVIQAKDMAGQVGGLSGSTTVNITLTDVNDNPPRFPQKHYQLYVPESAQVGSAVGKIKANDADTGSNADMTYSIINGDGVGIFSISTDKETREGILSLKKPLNYEKKKSYTLNIEGANTHLDFRFSHLGPFKDATMLKIIVGDVDEPPLFSMPSYVMEVYENAKIGTVVGTVLAQDPDSANSLVRYFIDYNAEDDRFFNIDANTGTIKTTKVLDREETPWYNITVAASENDNPSLLSHVTVGIRVLDVNDNPPELAREYDIVVCENSKPGQVIHTISATDKDDFANGPRFNFFLDEHLSINPNFTLKDNEDNTASILTRRRRFSRTIQDVYYLPIMISDGGIPSLSSSSTLTIRVCACERDGRVRTCHAEAFLSSAGLSTGALIAILLCVVILLAIVVLFITLRRSKKEPLIISEEDVRENVVTYDDEGGGEEDTEAFDITALRNPSAAEELKYRRDIRPEVKLTPRHQTLSTLESIDVQEFIKQRLAEADLDPSVPPYDSLQTYAYEGQRSEAGSISSLDSATTQSDQDYQYLGDWGPEFKTLAELYGEIESERTT</sequence>
<organism>
    <name type="scientific">Bos taurus</name>
    <name type="common">Bovine</name>
    <dbReference type="NCBI Taxonomy" id="9913"/>
    <lineage>
        <taxon>Eukaryota</taxon>
        <taxon>Metazoa</taxon>
        <taxon>Chordata</taxon>
        <taxon>Craniata</taxon>
        <taxon>Vertebrata</taxon>
        <taxon>Euteleostomi</taxon>
        <taxon>Mammalia</taxon>
        <taxon>Eutheria</taxon>
        <taxon>Laurasiatheria</taxon>
        <taxon>Artiodactyla</taxon>
        <taxon>Ruminantia</taxon>
        <taxon>Pecora</taxon>
        <taxon>Bovidae</taxon>
        <taxon>Bovinae</taxon>
        <taxon>Bos</taxon>
    </lineage>
</organism>
<reference key="1">
    <citation type="submission" date="2006-09" db="EMBL/GenBank/DDBJ databases">
        <authorList>
            <consortium name="NIH - Mammalian Gene Collection (MGC) project"/>
        </authorList>
    </citation>
    <scope>NUCLEOTIDE SEQUENCE [LARGE SCALE MRNA]</scope>
    <source>
        <strain>Hereford</strain>
        <tissue>Brain cortex</tissue>
    </source>
</reference>
<name>CAD18_BOVIN</name>
<evidence type="ECO:0000250" key="1"/>
<evidence type="ECO:0000250" key="2">
    <source>
        <dbReference type="UniProtKB" id="P97326"/>
    </source>
</evidence>
<evidence type="ECO:0000255" key="3"/>
<evidence type="ECO:0000255" key="4">
    <source>
        <dbReference type="PROSITE-ProRule" id="PRU00043"/>
    </source>
</evidence>
<evidence type="ECO:0000305" key="5"/>
<feature type="signal peptide" evidence="3">
    <location>
        <begin position="1"/>
        <end position="24"/>
    </location>
</feature>
<feature type="propeptide" id="PRO_0000285120" evidence="3">
    <location>
        <begin position="25"/>
        <end position="53"/>
    </location>
</feature>
<feature type="chain" id="PRO_0000285121" description="Cadherin-18">
    <location>
        <begin position="54"/>
        <end position="790"/>
    </location>
</feature>
<feature type="topological domain" description="Extracellular" evidence="3">
    <location>
        <begin position="54"/>
        <end position="608"/>
    </location>
</feature>
<feature type="transmembrane region" description="Helical" evidence="3">
    <location>
        <begin position="609"/>
        <end position="636"/>
    </location>
</feature>
<feature type="topological domain" description="Cytoplasmic" evidence="3">
    <location>
        <begin position="637"/>
        <end position="790"/>
    </location>
</feature>
<feature type="domain" description="Cadherin 1" evidence="4">
    <location>
        <begin position="54"/>
        <end position="159"/>
    </location>
</feature>
<feature type="domain" description="Cadherin 2" evidence="4">
    <location>
        <begin position="160"/>
        <end position="268"/>
    </location>
</feature>
<feature type="domain" description="Cadherin 3" evidence="4">
    <location>
        <begin position="269"/>
        <end position="383"/>
    </location>
</feature>
<feature type="domain" description="Cadherin 4" evidence="4">
    <location>
        <begin position="384"/>
        <end position="486"/>
    </location>
</feature>
<feature type="domain" description="Cadherin 5" evidence="4">
    <location>
        <begin position="487"/>
        <end position="608"/>
    </location>
</feature>
<feature type="modified residue" description="Phosphoserine" evidence="2">
    <location>
        <position position="786"/>
    </location>
</feature>
<feature type="glycosylation site" description="N-linked (GlcNAc...) asparagine" evidence="3">
    <location>
        <position position="36"/>
    </location>
</feature>
<feature type="glycosylation site" description="N-linked (GlcNAc...) asparagine" evidence="3">
    <location>
        <position position="255"/>
    </location>
</feature>
<feature type="glycosylation site" description="N-linked (GlcNAc...) asparagine" evidence="3">
    <location>
        <position position="455"/>
    </location>
</feature>
<feature type="glycosylation site" description="N-linked (GlcNAc...) asparagine" evidence="3">
    <location>
        <position position="536"/>
    </location>
</feature>
<comment type="function">
    <text evidence="1">Cadherins are calcium-dependent cell adhesion proteins. They preferentially interact with themselves in a homophilic manner in connecting cells; cadherins may thus contribute to the sorting of heterogeneous cell types (By similarity).</text>
</comment>
<comment type="subcellular location">
    <subcellularLocation>
        <location evidence="5">Cell membrane</location>
        <topology evidence="5">Single-pass type I membrane protein</topology>
    </subcellularLocation>
</comment>
<comment type="domain">
    <text evidence="1">Three calcium ions are usually bound at the interface of each cadherin domain and rigidify the connections, imparting a strong curvature to the full-length ectodomain.</text>
</comment>
<accession>Q08DJ5</accession>